<feature type="chain" id="PRO_0000334209" description="Probable ribonuclease FAU-1">
    <location>
        <begin position="1"/>
        <end position="471"/>
    </location>
</feature>
<proteinExistence type="evidence at protein level"/>
<accession>Q5JHN3</accession>
<sequence length="471" mass="54070">MSTDTRPTVRIRGIYSTALTKLFLDRGFGISQPSNKIVERFGLEKTYDDFDVDIYDKKDRHGVVLVGDAVEEAKKVLEEELIDVFFRRLPYQLYGIYKGLVVKIDEKYVYVDLGSAIGTIPRKDLPKAVEGDEILVQVKKHNLLPHLSTTLTIPGDYAVLIPKPIGAQRHVKISRKIRDNQERERLRILGLSIDLGKWGVLWRTAAAYKDWNLLRDEIVRLSKLADRLAKADTYFAPSLIIEGRNIYEVEFGGGAKRKLDEIRNKVVPTVDGHHQLKAKDPELGFAVEIAEGILSKVPGQRVKVNQGFWEALVENKGPKKGWLFTLEHVKPDGQRIRLGPGEVLEVSHNPLRVTIKRHLKPGKFYDGLELPIEFGDYAITELEAGKWWFVHRYYDKNGNLKGEYYNINTPVEIYPDGARYVDLEVDIVKWPDGKKEIIDQEELKEHYEEGIISEKLYRAVLRITQEVFERV</sequence>
<gene>
    <name evidence="2 4" type="primary">fau-1</name>
    <name type="ordered locus">TK2227</name>
</gene>
<comment type="function">
    <text evidence="1 3">Probable RNase involved in rRNA stability through maturation and/or degradation of precursor rRNAs. Preferentially cleaves UA sequences in the 5' precursor region of 5S rRNA (PubMed:28978920). Binds to RNA in loop regions with AU-rich sequences (By similarity).</text>
</comment>
<comment type="disruption phenotype">
    <text evidence="3">Deletion mutant shows a delay of exponential phase, reduction of maximum cell number and significant changes in the nucleotide sequence lengths of its 5S, 16S, and 23S rRNAs in early exponential phase.</text>
</comment>
<comment type="similarity">
    <text evidence="2 5">Belongs to the FAU-1 family.</text>
</comment>
<reference key="1">
    <citation type="journal article" date="2005" name="Genome Res.">
        <title>Complete genome sequence of the hyperthermophilic archaeon Thermococcus kodakaraensis KOD1 and comparison with Pyrococcus genomes.</title>
        <authorList>
            <person name="Fukui T."/>
            <person name="Atomi H."/>
            <person name="Kanai T."/>
            <person name="Matsumi R."/>
            <person name="Fujiwara S."/>
            <person name="Imanaka T."/>
        </authorList>
    </citation>
    <scope>NUCLEOTIDE SEQUENCE [LARGE SCALE GENOMIC DNA]</scope>
    <source>
        <strain>ATCC BAA-918 / JCM 12380 / KOD1</strain>
    </source>
</reference>
<reference key="2">
    <citation type="journal article" date="2017" name="Sci. Rep.">
        <title>An archaeal RNA binding protein, FAU-1, is a novel ribonuclease related to rRNA stability in Pyrococcus and Thermococcus.</title>
        <authorList>
            <person name="Ikeda Y."/>
            <person name="Okada Y."/>
            <person name="Sato A."/>
            <person name="Kanai T."/>
            <person name="Tomita M."/>
            <person name="Atomi H."/>
            <person name="Kanai A."/>
        </authorList>
    </citation>
    <scope>FUNCTION AS A RNASE</scope>
    <scope>DISRUPTION PHENOTYPE</scope>
    <source>
        <strain>ATCC BAA-918 / JCM 12380 / KOD1</strain>
    </source>
</reference>
<dbReference type="EC" id="3.1.26.-" evidence="2 3"/>
<dbReference type="EMBL" id="AP006878">
    <property type="protein sequence ID" value="BAD86416.1"/>
    <property type="molecule type" value="Genomic_DNA"/>
</dbReference>
<dbReference type="RefSeq" id="WP_011251177.1">
    <property type="nucleotide sequence ID" value="NC_006624.1"/>
</dbReference>
<dbReference type="SMR" id="Q5JHN3"/>
<dbReference type="STRING" id="69014.TK2227"/>
<dbReference type="EnsemblBacteria" id="BAD86416">
    <property type="protein sequence ID" value="BAD86416"/>
    <property type="gene ID" value="TK2227"/>
</dbReference>
<dbReference type="GeneID" id="78448767"/>
<dbReference type="KEGG" id="tko:TK2227"/>
<dbReference type="PATRIC" id="fig|69014.16.peg.2182"/>
<dbReference type="eggNOG" id="arCOG04307">
    <property type="taxonomic scope" value="Archaea"/>
</dbReference>
<dbReference type="HOGENOM" id="CLU_044303_0_0_2"/>
<dbReference type="InParanoid" id="Q5JHN3"/>
<dbReference type="OrthoDB" id="84798at2157"/>
<dbReference type="PhylomeDB" id="Q5JHN3"/>
<dbReference type="Proteomes" id="UP000000536">
    <property type="component" value="Chromosome"/>
</dbReference>
<dbReference type="GO" id="GO:0005737">
    <property type="term" value="C:cytoplasm"/>
    <property type="evidence" value="ECO:0000318"/>
    <property type="project" value="GO_Central"/>
</dbReference>
<dbReference type="GO" id="GO:0035925">
    <property type="term" value="F:mRNA 3'-UTR AU-rich region binding"/>
    <property type="evidence" value="ECO:0007669"/>
    <property type="project" value="UniProtKB-UniRule"/>
</dbReference>
<dbReference type="GO" id="GO:0016891">
    <property type="term" value="F:RNA endonuclease activity, producing 5'-phosphomonoesters"/>
    <property type="evidence" value="ECO:0007669"/>
    <property type="project" value="UniProtKB-UniRule"/>
</dbReference>
<dbReference type="GO" id="GO:0004540">
    <property type="term" value="F:RNA nuclease activity"/>
    <property type="evidence" value="ECO:0000318"/>
    <property type="project" value="GO_Central"/>
</dbReference>
<dbReference type="GO" id="GO:0006364">
    <property type="term" value="P:rRNA processing"/>
    <property type="evidence" value="ECO:0000318"/>
    <property type="project" value="GO_Central"/>
</dbReference>
<dbReference type="Gene3D" id="2.40.380.10">
    <property type="entry name" value="FomD-like"/>
    <property type="match status" value="1"/>
</dbReference>
<dbReference type="HAMAP" id="MF_01910">
    <property type="entry name" value="RNA_binding_AU_1"/>
    <property type="match status" value="1"/>
</dbReference>
<dbReference type="InterPro" id="IPR007295">
    <property type="entry name" value="DUF402"/>
</dbReference>
<dbReference type="InterPro" id="IPR035930">
    <property type="entry name" value="FomD-like_sf"/>
</dbReference>
<dbReference type="InterPro" id="IPR050212">
    <property type="entry name" value="Ntdp-like"/>
</dbReference>
<dbReference type="InterPro" id="IPR019307">
    <property type="entry name" value="RNA-bd_AU-1/RNase_E/G"/>
</dbReference>
<dbReference type="InterPro" id="IPR016730">
    <property type="entry name" value="RNA-bd_FAU-1"/>
</dbReference>
<dbReference type="InterPro" id="IPR003029">
    <property type="entry name" value="S1_domain"/>
</dbReference>
<dbReference type="PANTHER" id="PTHR39159">
    <property type="match status" value="1"/>
</dbReference>
<dbReference type="PANTHER" id="PTHR39159:SF1">
    <property type="entry name" value="UPF0374 PROTEIN YGAC"/>
    <property type="match status" value="1"/>
</dbReference>
<dbReference type="Pfam" id="PF04167">
    <property type="entry name" value="DUF402"/>
    <property type="match status" value="1"/>
</dbReference>
<dbReference type="Pfam" id="PF10150">
    <property type="entry name" value="RNase_E_G"/>
    <property type="match status" value="1"/>
</dbReference>
<dbReference type="PIRSF" id="PIRSF018644">
    <property type="entry name" value="RNA-binding_FAU-1"/>
    <property type="match status" value="1"/>
</dbReference>
<dbReference type="SMART" id="SM00316">
    <property type="entry name" value="S1"/>
    <property type="match status" value="1"/>
</dbReference>
<dbReference type="SUPFAM" id="SSF159234">
    <property type="entry name" value="FomD-like"/>
    <property type="match status" value="1"/>
</dbReference>
<organism>
    <name type="scientific">Thermococcus kodakarensis (strain ATCC BAA-918 / JCM 12380 / KOD1)</name>
    <name type="common">Pyrococcus kodakaraensis (strain KOD1)</name>
    <dbReference type="NCBI Taxonomy" id="69014"/>
    <lineage>
        <taxon>Archaea</taxon>
        <taxon>Methanobacteriati</taxon>
        <taxon>Methanobacteriota</taxon>
        <taxon>Thermococci</taxon>
        <taxon>Thermococcales</taxon>
        <taxon>Thermococcaceae</taxon>
        <taxon>Thermococcus</taxon>
    </lineage>
</organism>
<evidence type="ECO:0000250" key="1">
    <source>
        <dbReference type="UniProtKB" id="Q8U4Q7"/>
    </source>
</evidence>
<evidence type="ECO:0000255" key="2">
    <source>
        <dbReference type="HAMAP-Rule" id="MF_01910"/>
    </source>
</evidence>
<evidence type="ECO:0000269" key="3">
    <source>
    </source>
</evidence>
<evidence type="ECO:0000303" key="4">
    <source>
    </source>
</evidence>
<evidence type="ECO:0000305" key="5"/>
<protein>
    <recommendedName>
        <fullName evidence="2 5">Probable ribonuclease FAU-1</fullName>
        <ecNumber evidence="2 3">3.1.26.-</ecNumber>
    </recommendedName>
    <alternativeName>
        <fullName evidence="2">RNA-binding protein FAU-1</fullName>
    </alternativeName>
</protein>
<name>FAU1_THEKO</name>
<keyword id="KW-0255">Endonuclease</keyword>
<keyword id="KW-0378">Hydrolase</keyword>
<keyword id="KW-0540">Nuclease</keyword>
<keyword id="KW-1185">Reference proteome</keyword>
<keyword id="KW-0694">RNA-binding</keyword>
<keyword id="KW-0698">rRNA processing</keyword>